<dbReference type="EC" id="6.3.1.5" evidence="1"/>
<dbReference type="EMBL" id="CP000730">
    <property type="protein sequence ID" value="ABX29916.1"/>
    <property type="molecule type" value="Genomic_DNA"/>
</dbReference>
<dbReference type="RefSeq" id="WP_000040873.1">
    <property type="nucleotide sequence ID" value="NC_010079.1"/>
</dbReference>
<dbReference type="SMR" id="A8Z2S7"/>
<dbReference type="KEGG" id="sax:USA300HOU_1914"/>
<dbReference type="HOGENOM" id="CLU_059327_3_0_9"/>
<dbReference type="UniPathway" id="UPA00253">
    <property type="reaction ID" value="UER00333"/>
</dbReference>
<dbReference type="GO" id="GO:0005737">
    <property type="term" value="C:cytoplasm"/>
    <property type="evidence" value="ECO:0007669"/>
    <property type="project" value="InterPro"/>
</dbReference>
<dbReference type="GO" id="GO:0005524">
    <property type="term" value="F:ATP binding"/>
    <property type="evidence" value="ECO:0007669"/>
    <property type="project" value="UniProtKB-UniRule"/>
</dbReference>
<dbReference type="GO" id="GO:0004359">
    <property type="term" value="F:glutaminase activity"/>
    <property type="evidence" value="ECO:0007669"/>
    <property type="project" value="InterPro"/>
</dbReference>
<dbReference type="GO" id="GO:0046872">
    <property type="term" value="F:metal ion binding"/>
    <property type="evidence" value="ECO:0007669"/>
    <property type="project" value="UniProtKB-KW"/>
</dbReference>
<dbReference type="GO" id="GO:0003952">
    <property type="term" value="F:NAD+ synthase (glutamine-hydrolyzing) activity"/>
    <property type="evidence" value="ECO:0007669"/>
    <property type="project" value="InterPro"/>
</dbReference>
<dbReference type="GO" id="GO:0008795">
    <property type="term" value="F:NAD+ synthase activity"/>
    <property type="evidence" value="ECO:0007669"/>
    <property type="project" value="UniProtKB-UniRule"/>
</dbReference>
<dbReference type="GO" id="GO:0009435">
    <property type="term" value="P:NAD biosynthetic process"/>
    <property type="evidence" value="ECO:0007669"/>
    <property type="project" value="UniProtKB-UniRule"/>
</dbReference>
<dbReference type="CDD" id="cd00553">
    <property type="entry name" value="NAD_synthase"/>
    <property type="match status" value="1"/>
</dbReference>
<dbReference type="FunFam" id="3.40.50.620:FF:000015">
    <property type="entry name" value="NH(3)-dependent NAD(+) synthetase"/>
    <property type="match status" value="1"/>
</dbReference>
<dbReference type="Gene3D" id="3.40.50.620">
    <property type="entry name" value="HUPs"/>
    <property type="match status" value="1"/>
</dbReference>
<dbReference type="HAMAP" id="MF_00193">
    <property type="entry name" value="NadE_ammonia_dep"/>
    <property type="match status" value="1"/>
</dbReference>
<dbReference type="InterPro" id="IPR022310">
    <property type="entry name" value="NAD/GMP_synthase"/>
</dbReference>
<dbReference type="InterPro" id="IPR003694">
    <property type="entry name" value="NAD_synthase"/>
</dbReference>
<dbReference type="InterPro" id="IPR022926">
    <property type="entry name" value="NH(3)-dep_NAD(+)_synth"/>
</dbReference>
<dbReference type="InterPro" id="IPR014729">
    <property type="entry name" value="Rossmann-like_a/b/a_fold"/>
</dbReference>
<dbReference type="NCBIfam" id="TIGR00552">
    <property type="entry name" value="nadE"/>
    <property type="match status" value="1"/>
</dbReference>
<dbReference type="NCBIfam" id="NF001979">
    <property type="entry name" value="PRK00768.1"/>
    <property type="match status" value="1"/>
</dbReference>
<dbReference type="PANTHER" id="PTHR23090">
    <property type="entry name" value="NH 3 /GLUTAMINE-DEPENDENT NAD + SYNTHETASE"/>
    <property type="match status" value="1"/>
</dbReference>
<dbReference type="PANTHER" id="PTHR23090:SF7">
    <property type="entry name" value="NH(3)-DEPENDENT NAD(+) SYNTHETASE"/>
    <property type="match status" value="1"/>
</dbReference>
<dbReference type="Pfam" id="PF02540">
    <property type="entry name" value="NAD_synthase"/>
    <property type="match status" value="1"/>
</dbReference>
<dbReference type="SUPFAM" id="SSF52402">
    <property type="entry name" value="Adenine nucleotide alpha hydrolases-like"/>
    <property type="match status" value="1"/>
</dbReference>
<protein>
    <recommendedName>
        <fullName evidence="1">NH(3)-dependent NAD(+) synthetase</fullName>
        <ecNumber evidence="1">6.3.1.5</ecNumber>
    </recommendedName>
</protein>
<feature type="chain" id="PRO_1000077619" description="NH(3)-dependent NAD(+) synthetase">
    <location>
        <begin position="1"/>
        <end position="273"/>
    </location>
</feature>
<feature type="binding site" evidence="1">
    <location>
        <begin position="47"/>
        <end position="54"/>
    </location>
    <ligand>
        <name>ATP</name>
        <dbReference type="ChEBI" id="CHEBI:30616"/>
    </ligand>
</feature>
<feature type="binding site" evidence="1">
    <location>
        <position position="53"/>
    </location>
    <ligand>
        <name>Mg(2+)</name>
        <dbReference type="ChEBI" id="CHEBI:18420"/>
    </ligand>
</feature>
<feature type="binding site" evidence="1">
    <location>
        <position position="139"/>
    </location>
    <ligand>
        <name>deamido-NAD(+)</name>
        <dbReference type="ChEBI" id="CHEBI:58437"/>
    </ligand>
</feature>
<feature type="binding site" evidence="1">
    <location>
        <position position="159"/>
    </location>
    <ligand>
        <name>ATP</name>
        <dbReference type="ChEBI" id="CHEBI:30616"/>
    </ligand>
</feature>
<feature type="binding site" evidence="1">
    <location>
        <position position="164"/>
    </location>
    <ligand>
        <name>Mg(2+)</name>
        <dbReference type="ChEBI" id="CHEBI:18420"/>
    </ligand>
</feature>
<feature type="binding site" evidence="1">
    <location>
        <position position="172"/>
    </location>
    <ligand>
        <name>deamido-NAD(+)</name>
        <dbReference type="ChEBI" id="CHEBI:58437"/>
    </ligand>
</feature>
<feature type="binding site" evidence="1">
    <location>
        <position position="179"/>
    </location>
    <ligand>
        <name>deamido-NAD(+)</name>
        <dbReference type="ChEBI" id="CHEBI:58437"/>
    </ligand>
</feature>
<feature type="binding site" evidence="1">
    <location>
        <position position="188"/>
    </location>
    <ligand>
        <name>ATP</name>
        <dbReference type="ChEBI" id="CHEBI:30616"/>
    </ligand>
</feature>
<feature type="binding site" evidence="1">
    <location>
        <position position="210"/>
    </location>
    <ligand>
        <name>ATP</name>
        <dbReference type="ChEBI" id="CHEBI:30616"/>
    </ligand>
</feature>
<feature type="binding site" evidence="1">
    <location>
        <begin position="259"/>
        <end position="260"/>
    </location>
    <ligand>
        <name>deamido-NAD(+)</name>
        <dbReference type="ChEBI" id="CHEBI:58437"/>
    </ligand>
</feature>
<gene>
    <name evidence="1" type="primary">nadE</name>
    <name type="ordered locus">USA300HOU_1914</name>
</gene>
<keyword id="KW-0067">ATP-binding</keyword>
<keyword id="KW-0436">Ligase</keyword>
<keyword id="KW-0460">Magnesium</keyword>
<keyword id="KW-0479">Metal-binding</keyword>
<keyword id="KW-0520">NAD</keyword>
<keyword id="KW-0547">Nucleotide-binding</keyword>
<accession>A8Z2S7</accession>
<sequence length="273" mass="30697">MSKLQDVIVQEMKVKKRIDSAEEIMELKQFIKNYVQSHSFIKSLVLGISGGQDSTLVGKLVQMSVNELREEGIDCTFIAVKLPYGVQKDADEVEQALRFIEPDEIVTVNIKPAVDQSVQSLKEAGIVLTDFQKGNEKARERMKVQFSIASNRQGIVVGTDHSAENITGFYTKYGDGAADIAPIFGLNKRQGRQLLAYLGAPKELYEKTPTADLEDDKPQLPDEDALGVTYEAIDNYLEGKPVTPEEQKVIENHYIRNAHKRELAYTRYTWPKS</sequence>
<reference key="1">
    <citation type="journal article" date="2007" name="BMC Microbiol.">
        <title>Subtle genetic changes enhance virulence of methicillin resistant and sensitive Staphylococcus aureus.</title>
        <authorList>
            <person name="Highlander S.K."/>
            <person name="Hulten K.G."/>
            <person name="Qin X."/>
            <person name="Jiang H."/>
            <person name="Yerrapragada S."/>
            <person name="Mason E.O. Jr."/>
            <person name="Shang Y."/>
            <person name="Williams T.M."/>
            <person name="Fortunov R.M."/>
            <person name="Liu Y."/>
            <person name="Igboeli O."/>
            <person name="Petrosino J."/>
            <person name="Tirumalai M."/>
            <person name="Uzman A."/>
            <person name="Fox G.E."/>
            <person name="Cardenas A.M."/>
            <person name="Muzny D.M."/>
            <person name="Hemphill L."/>
            <person name="Ding Y."/>
            <person name="Dugan S."/>
            <person name="Blyth P.R."/>
            <person name="Buhay C.J."/>
            <person name="Dinh H.H."/>
            <person name="Hawes A.C."/>
            <person name="Holder M."/>
            <person name="Kovar C.L."/>
            <person name="Lee S.L."/>
            <person name="Liu W."/>
            <person name="Nazareth L.V."/>
            <person name="Wang Q."/>
            <person name="Zhou J."/>
            <person name="Kaplan S.L."/>
            <person name="Weinstock G.M."/>
        </authorList>
    </citation>
    <scope>NUCLEOTIDE SEQUENCE [LARGE SCALE GENOMIC DNA]</scope>
    <source>
        <strain>USA300 / TCH1516</strain>
    </source>
</reference>
<comment type="function">
    <text evidence="1">Catalyzes the ATP-dependent amidation of deamido-NAD to form NAD. Uses ammonia as a nitrogen source.</text>
</comment>
<comment type="catalytic activity">
    <reaction evidence="1">
        <text>deamido-NAD(+) + NH4(+) + ATP = AMP + diphosphate + NAD(+) + H(+)</text>
        <dbReference type="Rhea" id="RHEA:21188"/>
        <dbReference type="ChEBI" id="CHEBI:15378"/>
        <dbReference type="ChEBI" id="CHEBI:28938"/>
        <dbReference type="ChEBI" id="CHEBI:30616"/>
        <dbReference type="ChEBI" id="CHEBI:33019"/>
        <dbReference type="ChEBI" id="CHEBI:57540"/>
        <dbReference type="ChEBI" id="CHEBI:58437"/>
        <dbReference type="ChEBI" id="CHEBI:456215"/>
        <dbReference type="EC" id="6.3.1.5"/>
    </reaction>
</comment>
<comment type="pathway">
    <text evidence="1">Cofactor biosynthesis; NAD(+) biosynthesis; NAD(+) from deamido-NAD(+) (ammonia route): step 1/1.</text>
</comment>
<comment type="subunit">
    <text evidence="1">Homodimer.</text>
</comment>
<comment type="similarity">
    <text evidence="1">Belongs to the NAD synthetase family.</text>
</comment>
<name>NADE_STAAT</name>
<proteinExistence type="inferred from homology"/>
<organism>
    <name type="scientific">Staphylococcus aureus (strain USA300 / TCH1516)</name>
    <dbReference type="NCBI Taxonomy" id="451516"/>
    <lineage>
        <taxon>Bacteria</taxon>
        <taxon>Bacillati</taxon>
        <taxon>Bacillota</taxon>
        <taxon>Bacilli</taxon>
        <taxon>Bacillales</taxon>
        <taxon>Staphylococcaceae</taxon>
        <taxon>Staphylococcus</taxon>
    </lineage>
</organism>
<evidence type="ECO:0000255" key="1">
    <source>
        <dbReference type="HAMAP-Rule" id="MF_00193"/>
    </source>
</evidence>